<protein>
    <recommendedName>
        <fullName evidence="10">Small ribosomal subunit protein uS5m</fullName>
    </recommendedName>
    <alternativeName>
        <fullName>37S ribosomal protein S5, mitochondrial</fullName>
    </alternativeName>
</protein>
<accession>P33759</accession>
<accession>D6VQP7</accession>
<name>RT05_YEAST</name>
<sequence length="307" mass="34883">MFKRQLSTSVRYLQHYDESLLSRYYPESLLKSIKLAQQTIPEDTKFRVSRNVEFAPPYLDDFTKIHPFWDYKPGMPHLHAQEENNNFSIFRWDQVQQPLPGEGNILPPGVSLPNDGGRKSKSADVAAGLHKQTGVDPDYITRKLTMKPLVMKRVSNQTGKGKIASFYALVVVGDKNGMVGLGEGKSREEMSKAIFKAHWDAVRNLKEIPRYENRTIYGDIDFRYHGVKLHLRSAKPGFGLRVNHVIFEICECAGIKDLSGKVYKSRNDMNIAKGTIEAFTKAQKTLDEVALGRGKKLVDVRKVYYSS</sequence>
<proteinExistence type="evidence at protein level"/>
<organism>
    <name type="scientific">Saccharomyces cerevisiae (strain ATCC 204508 / S288c)</name>
    <name type="common">Baker's yeast</name>
    <dbReference type="NCBI Taxonomy" id="559292"/>
    <lineage>
        <taxon>Eukaryota</taxon>
        <taxon>Fungi</taxon>
        <taxon>Dikarya</taxon>
        <taxon>Ascomycota</taxon>
        <taxon>Saccharomycotina</taxon>
        <taxon>Saccharomycetes</taxon>
        <taxon>Saccharomycetales</taxon>
        <taxon>Saccharomycetaceae</taxon>
        <taxon>Saccharomyces</taxon>
    </lineage>
</organism>
<feature type="transit peptide" description="Mitochondrion" evidence="1">
    <location>
        <begin position="1"/>
        <end position="13"/>
    </location>
</feature>
<feature type="chain" id="PRO_0000131688" description="Small ribosomal subunit protein uS5m">
    <location>
        <begin position="14"/>
        <end position="307"/>
    </location>
</feature>
<feature type="domain" description="S5 DRBM" evidence="2">
    <location>
        <begin position="144"/>
        <end position="208"/>
    </location>
</feature>
<feature type="helix" evidence="15">
    <location>
        <begin position="18"/>
        <end position="22"/>
    </location>
</feature>
<feature type="helix" evidence="15">
    <location>
        <begin position="27"/>
        <end position="29"/>
    </location>
</feature>
<feature type="helix" evidence="15">
    <location>
        <begin position="30"/>
        <end position="39"/>
    </location>
</feature>
<feature type="strand" evidence="15">
    <location>
        <begin position="57"/>
        <end position="59"/>
    </location>
</feature>
<feature type="turn" evidence="15">
    <location>
        <begin position="67"/>
        <end position="69"/>
    </location>
</feature>
<feature type="helix" evidence="15">
    <location>
        <begin position="84"/>
        <end position="86"/>
    </location>
</feature>
<feature type="turn" evidence="14">
    <location>
        <begin position="113"/>
        <end position="115"/>
    </location>
</feature>
<feature type="helix" evidence="15">
    <location>
        <begin position="121"/>
        <end position="133"/>
    </location>
</feature>
<feature type="helix" evidence="15">
    <location>
        <begin position="137"/>
        <end position="143"/>
    </location>
</feature>
<feature type="strand" evidence="15">
    <location>
        <begin position="145"/>
        <end position="158"/>
    </location>
</feature>
<feature type="strand" evidence="15">
    <location>
        <begin position="161"/>
        <end position="173"/>
    </location>
</feature>
<feature type="strand" evidence="15">
    <location>
        <begin position="175"/>
        <end position="188"/>
    </location>
</feature>
<feature type="helix" evidence="15">
    <location>
        <begin position="190"/>
        <end position="203"/>
    </location>
</feature>
<feature type="turn" evidence="15">
    <location>
        <begin position="212"/>
        <end position="214"/>
    </location>
</feature>
<feature type="strand" evidence="15">
    <location>
        <begin position="217"/>
        <end position="224"/>
    </location>
</feature>
<feature type="strand" evidence="15">
    <location>
        <begin position="227"/>
        <end position="233"/>
    </location>
</feature>
<feature type="strand" evidence="15">
    <location>
        <begin position="240"/>
        <end position="242"/>
    </location>
</feature>
<feature type="helix" evidence="15">
    <location>
        <begin position="244"/>
        <end position="253"/>
    </location>
</feature>
<feature type="strand" evidence="15">
    <location>
        <begin position="258"/>
        <end position="264"/>
    </location>
</feature>
<feature type="helix" evidence="15">
    <location>
        <begin position="268"/>
        <end position="281"/>
    </location>
</feature>
<feature type="helix" evidence="15">
    <location>
        <begin position="286"/>
        <end position="293"/>
    </location>
</feature>
<feature type="strand" evidence="15">
    <location>
        <begin position="295"/>
        <end position="299"/>
    </location>
</feature>
<feature type="helix" evidence="15">
    <location>
        <begin position="300"/>
        <end position="304"/>
    </location>
</feature>
<evidence type="ECO:0000255" key="1"/>
<evidence type="ECO:0000255" key="2">
    <source>
        <dbReference type="PROSITE-ProRule" id="PRU00268"/>
    </source>
</evidence>
<evidence type="ECO:0000269" key="3">
    <source>
    </source>
</evidence>
<evidence type="ECO:0000269" key="4">
    <source>
    </source>
</evidence>
<evidence type="ECO:0000269" key="5">
    <source>
    </source>
</evidence>
<evidence type="ECO:0000269" key="6">
    <source>
    </source>
</evidence>
<evidence type="ECO:0000269" key="7">
    <source>
    </source>
</evidence>
<evidence type="ECO:0000269" key="8">
    <source>
    </source>
</evidence>
<evidence type="ECO:0000269" key="9">
    <source>
    </source>
</evidence>
<evidence type="ECO:0000303" key="10">
    <source>
    </source>
</evidence>
<evidence type="ECO:0000305" key="11"/>
<evidence type="ECO:0000305" key="12">
    <source>
    </source>
</evidence>
<evidence type="ECO:0000305" key="13">
    <source>
    </source>
</evidence>
<evidence type="ECO:0007829" key="14">
    <source>
        <dbReference type="PDB" id="8D8K"/>
    </source>
</evidence>
<evidence type="ECO:0007829" key="15">
    <source>
        <dbReference type="PDB" id="8D8L"/>
    </source>
</evidence>
<reference key="1">
    <citation type="journal article" date="1993" name="Yeast">
        <title>The complete sequence of a 6794 bp segment located on the right arm of chromosome II of Saccharomyces cerevisiae. Finding of a putative dUTPase in a yeast.</title>
        <authorList>
            <person name="Doignon F."/>
            <person name="Biteau N."/>
            <person name="Aigle M."/>
            <person name="Crouzet M."/>
        </authorList>
    </citation>
    <scope>NUCLEOTIDE SEQUENCE [GENOMIC DNA]</scope>
    <source>
        <strain>ATCC 204508 / S288c</strain>
    </source>
</reference>
<reference key="2">
    <citation type="journal article" date="1994" name="EMBO J.">
        <title>Complete DNA sequence of yeast chromosome II.</title>
        <authorList>
            <person name="Feldmann H."/>
            <person name="Aigle M."/>
            <person name="Aljinovic G."/>
            <person name="Andre B."/>
            <person name="Baclet M.C."/>
            <person name="Barthe C."/>
            <person name="Baur A."/>
            <person name="Becam A.-M."/>
            <person name="Biteau N."/>
            <person name="Boles E."/>
            <person name="Brandt T."/>
            <person name="Brendel M."/>
            <person name="Brueckner M."/>
            <person name="Bussereau F."/>
            <person name="Christiansen C."/>
            <person name="Contreras R."/>
            <person name="Crouzet M."/>
            <person name="Cziepluch C."/>
            <person name="Demolis N."/>
            <person name="Delaveau T."/>
            <person name="Doignon F."/>
            <person name="Domdey H."/>
            <person name="Duesterhus S."/>
            <person name="Dubois E."/>
            <person name="Dujon B."/>
            <person name="El Bakkoury M."/>
            <person name="Entian K.-D."/>
            <person name="Feuermann M."/>
            <person name="Fiers W."/>
            <person name="Fobo G.M."/>
            <person name="Fritz C."/>
            <person name="Gassenhuber J."/>
            <person name="Glansdorff N."/>
            <person name="Goffeau A."/>
            <person name="Grivell L.A."/>
            <person name="de Haan M."/>
            <person name="Hein C."/>
            <person name="Herbert C.J."/>
            <person name="Hollenberg C.P."/>
            <person name="Holmstroem K."/>
            <person name="Jacq C."/>
            <person name="Jacquet M."/>
            <person name="Jauniaux J.-C."/>
            <person name="Jonniaux J.-L."/>
            <person name="Kallesoee T."/>
            <person name="Kiesau P."/>
            <person name="Kirchrath L."/>
            <person name="Koetter P."/>
            <person name="Korol S."/>
            <person name="Liebl S."/>
            <person name="Logghe M."/>
            <person name="Lohan A.J.E."/>
            <person name="Louis E.J."/>
            <person name="Li Z.Y."/>
            <person name="Maat M.J."/>
            <person name="Mallet L."/>
            <person name="Mannhaupt G."/>
            <person name="Messenguy F."/>
            <person name="Miosga T."/>
            <person name="Molemans F."/>
            <person name="Mueller S."/>
            <person name="Nasr F."/>
            <person name="Obermaier B."/>
            <person name="Perea J."/>
            <person name="Pierard A."/>
            <person name="Piravandi E."/>
            <person name="Pohl F.M."/>
            <person name="Pohl T.M."/>
            <person name="Potier S."/>
            <person name="Proft M."/>
            <person name="Purnelle B."/>
            <person name="Ramezani Rad M."/>
            <person name="Rieger M."/>
            <person name="Rose M."/>
            <person name="Schaaff-Gerstenschlaeger I."/>
            <person name="Scherens B."/>
            <person name="Schwarzlose C."/>
            <person name="Skala J."/>
            <person name="Slonimski P.P."/>
            <person name="Smits P.H.M."/>
            <person name="Souciet J.-L."/>
            <person name="Steensma H.Y."/>
            <person name="Stucka R."/>
            <person name="Urrestarazu L.A."/>
            <person name="van der Aart Q.J.M."/>
            <person name="Van Dyck L."/>
            <person name="Vassarotti A."/>
            <person name="Vetter I."/>
            <person name="Vierendeels F."/>
            <person name="Vissers S."/>
            <person name="Wagner G."/>
            <person name="de Wergifosse P."/>
            <person name="Wolfe K.H."/>
            <person name="Zagulski M."/>
            <person name="Zimmermann F.K."/>
            <person name="Mewes H.-W."/>
            <person name="Kleine K."/>
        </authorList>
    </citation>
    <scope>NUCLEOTIDE SEQUENCE [LARGE SCALE GENOMIC DNA]</scope>
    <source>
        <strain>ATCC 204508 / S288c</strain>
    </source>
</reference>
<reference key="3">
    <citation type="journal article" date="2014" name="G3 (Bethesda)">
        <title>The reference genome sequence of Saccharomyces cerevisiae: Then and now.</title>
        <authorList>
            <person name="Engel S.R."/>
            <person name="Dietrich F.S."/>
            <person name="Fisk D.G."/>
            <person name="Binkley G."/>
            <person name="Balakrishnan R."/>
            <person name="Costanzo M.C."/>
            <person name="Dwight S.S."/>
            <person name="Hitz B.C."/>
            <person name="Karra K."/>
            <person name="Nash R.S."/>
            <person name="Weng S."/>
            <person name="Wong E.D."/>
            <person name="Lloyd P."/>
            <person name="Skrzypek M.S."/>
            <person name="Miyasato S.R."/>
            <person name="Simison M."/>
            <person name="Cherry J.M."/>
        </authorList>
    </citation>
    <scope>GENOME REANNOTATION</scope>
    <source>
        <strain>ATCC 204508 / S288c</strain>
    </source>
</reference>
<reference key="4">
    <citation type="journal article" date="2001" name="J. Biol. Chem.">
        <title>Identification of 12 new yeast mitochondrial ribosomal proteins including 6 that have no prokaryotic homologues.</title>
        <authorList>
            <person name="Saveanu C."/>
            <person name="Fromont-Racine M."/>
            <person name="Harington A."/>
            <person name="Ricard F."/>
            <person name="Namane A."/>
            <person name="Jacquier A."/>
        </authorList>
    </citation>
    <scope>IDENTIFICATION IN THE MITOCHONDRIAL RIBOSOMAL SMALL COMPLEX</scope>
    <scope>IDENTIFICATION BY MASS SPECTROMETRY</scope>
</reference>
<reference key="5">
    <citation type="journal article" date="2002" name="Eur. J. Biochem.">
        <title>Tag-mediated isolation of yeast mitochondrial ribosome and mass spectrometric identification of its new components.</title>
        <authorList>
            <person name="Gan X."/>
            <person name="Kitakawa M."/>
            <person name="Yoshino K."/>
            <person name="Oshiro N."/>
            <person name="Yonezawa K."/>
            <person name="Isono K."/>
        </authorList>
    </citation>
    <scope>IDENTIFICATION IN THE MITOCHONDRIAL RIBOSOMAL SMALL COMPLEX</scope>
    <scope>IDENTIFICATION BY MASS SPECTROMETRY</scope>
</reference>
<reference key="6">
    <citation type="journal article" date="2003" name="Nature">
        <title>Global analysis of protein localization in budding yeast.</title>
        <authorList>
            <person name="Huh W.-K."/>
            <person name="Falvo J.V."/>
            <person name="Gerke L.C."/>
            <person name="Carroll A.S."/>
            <person name="Howson R.W."/>
            <person name="Weissman J.S."/>
            <person name="O'Shea E.K."/>
        </authorList>
    </citation>
    <scope>SUBCELLULAR LOCATION [LARGE SCALE ANALYSIS]</scope>
</reference>
<reference key="7">
    <citation type="journal article" date="2003" name="Nature">
        <title>Global analysis of protein expression in yeast.</title>
        <authorList>
            <person name="Ghaemmaghami S."/>
            <person name="Huh W.-K."/>
            <person name="Bower K."/>
            <person name="Howson R.W."/>
            <person name="Belle A."/>
            <person name="Dephoure N."/>
            <person name="O'Shea E.K."/>
            <person name="Weissman J.S."/>
        </authorList>
    </citation>
    <scope>LEVEL OF PROTEIN EXPRESSION [LARGE SCALE ANALYSIS]</scope>
</reference>
<reference key="8">
    <citation type="journal article" date="2003" name="Proc. Natl. Acad. Sci. U.S.A.">
        <title>The proteome of Saccharomyces cerevisiae mitochondria.</title>
        <authorList>
            <person name="Sickmann A."/>
            <person name="Reinders J."/>
            <person name="Wagner Y."/>
            <person name="Joppich C."/>
            <person name="Zahedi R.P."/>
            <person name="Meyer H.E."/>
            <person name="Schoenfisch B."/>
            <person name="Perschil I."/>
            <person name="Chacinska A."/>
            <person name="Guiard B."/>
            <person name="Rehling P."/>
            <person name="Pfanner N."/>
            <person name="Meisinger C."/>
        </authorList>
    </citation>
    <scope>SUBCELLULAR LOCATION [LARGE SCALE ANALYSIS]</scope>
    <source>
        <strain>ATCC 76625 / YPH499</strain>
    </source>
</reference>
<reference key="9">
    <citation type="journal article" date="2015" name="Nat. Commun.">
        <title>Organization of the mitochondrial translation machinery studied in situ by cryoelectron tomography.</title>
        <authorList>
            <person name="Pfeffer S."/>
            <person name="Woellhaf M.W."/>
            <person name="Herrmann J.M."/>
            <person name="Forster F."/>
        </authorList>
    </citation>
    <scope>SUBCELLULAR LOCATION</scope>
</reference>
<reference key="10">
    <citation type="journal article" date="2017" name="Science">
        <title>The structure of the yeast mitochondrial ribosome.</title>
        <authorList>
            <person name="Desai N."/>
            <person name="Brown A."/>
            <person name="Amunts A."/>
            <person name="Ramakrishnan V."/>
        </authorList>
    </citation>
    <scope>STRUCTURE BY ELECTRON MICROSCOPY (3.25 ANGSTROMS)</scope>
    <scope>SUBUNIT</scope>
</reference>
<gene>
    <name type="primary">MRPS5</name>
    <name type="ordered locus">YBR251W</name>
    <name type="ORF">YBR1704</name>
</gene>
<dbReference type="EMBL" id="L20296">
    <property type="protein sequence ID" value="AAA65610.1"/>
    <property type="molecule type" value="Genomic_DNA"/>
</dbReference>
<dbReference type="EMBL" id="Z36120">
    <property type="protein sequence ID" value="CAA85214.1"/>
    <property type="molecule type" value="Genomic_DNA"/>
</dbReference>
<dbReference type="EMBL" id="BK006936">
    <property type="protein sequence ID" value="DAA07367.1"/>
    <property type="molecule type" value="Genomic_DNA"/>
</dbReference>
<dbReference type="PIR" id="S38374">
    <property type="entry name" value="S38374"/>
</dbReference>
<dbReference type="RefSeq" id="NP_009810.3">
    <property type="nucleotide sequence ID" value="NM_001178599.3"/>
</dbReference>
<dbReference type="PDB" id="5MRC">
    <property type="method" value="EM"/>
    <property type="resolution" value="3.25 A"/>
    <property type="chains" value="EE=14-306"/>
</dbReference>
<dbReference type="PDB" id="5MRE">
    <property type="method" value="EM"/>
    <property type="resolution" value="3.75 A"/>
    <property type="chains" value="EE=14-306"/>
</dbReference>
<dbReference type="PDB" id="5MRF">
    <property type="method" value="EM"/>
    <property type="resolution" value="4.97 A"/>
    <property type="chains" value="EE=14-306"/>
</dbReference>
<dbReference type="PDB" id="8D8J">
    <property type="method" value="EM"/>
    <property type="resolution" value="3.80 A"/>
    <property type="chains" value="E=1-307"/>
</dbReference>
<dbReference type="PDB" id="8D8K">
    <property type="method" value="EM"/>
    <property type="resolution" value="3.13 A"/>
    <property type="chains" value="E=1-307"/>
</dbReference>
<dbReference type="PDB" id="8D8L">
    <property type="method" value="EM"/>
    <property type="resolution" value="2.60 A"/>
    <property type="chains" value="E=1-307"/>
</dbReference>
<dbReference type="PDB" id="8OM2">
    <property type="method" value="EM"/>
    <property type="resolution" value="2.57 A"/>
    <property type="chains" value="E=1-307"/>
</dbReference>
<dbReference type="PDB" id="8OM3">
    <property type="method" value="EM"/>
    <property type="resolution" value="2.87 A"/>
    <property type="chains" value="E=1-307"/>
</dbReference>
<dbReference type="PDB" id="8OM4">
    <property type="method" value="EM"/>
    <property type="resolution" value="2.32 A"/>
    <property type="chains" value="E=1-307"/>
</dbReference>
<dbReference type="PDBsum" id="5MRC"/>
<dbReference type="PDBsum" id="5MRE"/>
<dbReference type="PDBsum" id="5MRF"/>
<dbReference type="PDBsum" id="8D8J"/>
<dbReference type="PDBsum" id="8D8K"/>
<dbReference type="PDBsum" id="8D8L"/>
<dbReference type="PDBsum" id="8OM2"/>
<dbReference type="PDBsum" id="8OM3"/>
<dbReference type="PDBsum" id="8OM4"/>
<dbReference type="EMDB" id="EMD-16966"/>
<dbReference type="EMDB" id="EMD-16967"/>
<dbReference type="EMDB" id="EMD-16968"/>
<dbReference type="EMDB" id="EMD-27249"/>
<dbReference type="EMDB" id="EMD-27250"/>
<dbReference type="EMDB" id="EMD-27251"/>
<dbReference type="EMDB" id="EMD-3551"/>
<dbReference type="EMDB" id="EMD-3552"/>
<dbReference type="EMDB" id="EMD-3553"/>
<dbReference type="SMR" id="P33759"/>
<dbReference type="BioGRID" id="32946">
    <property type="interactions" value="175"/>
</dbReference>
<dbReference type="ComplexPortal" id="CPX-1603">
    <property type="entry name" value="37S mitochondrial small ribosomal subunit"/>
</dbReference>
<dbReference type="DIP" id="DIP-2869N"/>
<dbReference type="FunCoup" id="P33759">
    <property type="interactions" value="803"/>
</dbReference>
<dbReference type="IntAct" id="P33759">
    <property type="interactions" value="56"/>
</dbReference>
<dbReference type="MINT" id="P33759"/>
<dbReference type="STRING" id="4932.YBR251W"/>
<dbReference type="PaxDb" id="4932-YBR251W"/>
<dbReference type="PeptideAtlas" id="P33759"/>
<dbReference type="EnsemblFungi" id="YBR251W_mRNA">
    <property type="protein sequence ID" value="YBR251W"/>
    <property type="gene ID" value="YBR251W"/>
</dbReference>
<dbReference type="GeneID" id="852553"/>
<dbReference type="KEGG" id="sce:YBR251W"/>
<dbReference type="AGR" id="SGD:S000000455"/>
<dbReference type="SGD" id="S000000455">
    <property type="gene designation" value="MRPS5"/>
</dbReference>
<dbReference type="VEuPathDB" id="FungiDB:YBR251W"/>
<dbReference type="eggNOG" id="KOG2646">
    <property type="taxonomic scope" value="Eukaryota"/>
</dbReference>
<dbReference type="GeneTree" id="ENSGT00390000001878"/>
<dbReference type="HOGENOM" id="CLU_037994_0_0_1"/>
<dbReference type="InParanoid" id="P33759"/>
<dbReference type="OMA" id="YWDYKPG"/>
<dbReference type="OrthoDB" id="309483at2759"/>
<dbReference type="BioCyc" id="YEAST:G3O-29177-MONOMER"/>
<dbReference type="BioGRID-ORCS" id="852553">
    <property type="hits" value="5 hits in 10 CRISPR screens"/>
</dbReference>
<dbReference type="PRO" id="PR:P33759"/>
<dbReference type="Proteomes" id="UP000002311">
    <property type="component" value="Chromosome II"/>
</dbReference>
<dbReference type="RNAct" id="P33759">
    <property type="molecule type" value="protein"/>
</dbReference>
<dbReference type="GO" id="GO:0005743">
    <property type="term" value="C:mitochondrial inner membrane"/>
    <property type="evidence" value="ECO:0000303"/>
    <property type="project" value="ComplexPortal"/>
</dbReference>
<dbReference type="GO" id="GO:0005763">
    <property type="term" value="C:mitochondrial small ribosomal subunit"/>
    <property type="evidence" value="ECO:0000314"/>
    <property type="project" value="SGD"/>
</dbReference>
<dbReference type="GO" id="GO:0005739">
    <property type="term" value="C:mitochondrion"/>
    <property type="evidence" value="ECO:0007005"/>
    <property type="project" value="SGD"/>
</dbReference>
<dbReference type="GO" id="GO:0003723">
    <property type="term" value="F:RNA binding"/>
    <property type="evidence" value="ECO:0007669"/>
    <property type="project" value="InterPro"/>
</dbReference>
<dbReference type="GO" id="GO:0003735">
    <property type="term" value="F:structural constituent of ribosome"/>
    <property type="evidence" value="ECO:0000314"/>
    <property type="project" value="SGD"/>
</dbReference>
<dbReference type="GO" id="GO:0032543">
    <property type="term" value="P:mitochondrial translation"/>
    <property type="evidence" value="ECO:0000303"/>
    <property type="project" value="ComplexPortal"/>
</dbReference>
<dbReference type="GO" id="GO:0006412">
    <property type="term" value="P:translation"/>
    <property type="evidence" value="ECO:0000318"/>
    <property type="project" value="GO_Central"/>
</dbReference>
<dbReference type="FunFam" id="3.30.160.20:FF:000022">
    <property type="entry name" value="28S ribosomal protein S5, mitochondrial"/>
    <property type="match status" value="1"/>
</dbReference>
<dbReference type="FunFam" id="3.30.230.10:FF:000041">
    <property type="entry name" value="37S ribosomal protein S5"/>
    <property type="match status" value="1"/>
</dbReference>
<dbReference type="Gene3D" id="3.30.160.20">
    <property type="match status" value="1"/>
</dbReference>
<dbReference type="Gene3D" id="3.30.230.10">
    <property type="match status" value="1"/>
</dbReference>
<dbReference type="InterPro" id="IPR020568">
    <property type="entry name" value="Ribosomal_Su5_D2-typ_SF"/>
</dbReference>
<dbReference type="InterPro" id="IPR000851">
    <property type="entry name" value="Ribosomal_uS5"/>
</dbReference>
<dbReference type="InterPro" id="IPR005324">
    <property type="entry name" value="Ribosomal_uS5_C"/>
</dbReference>
<dbReference type="InterPro" id="IPR013810">
    <property type="entry name" value="Ribosomal_uS5_N"/>
</dbReference>
<dbReference type="InterPro" id="IPR018192">
    <property type="entry name" value="Ribosomal_uS5_N_CS"/>
</dbReference>
<dbReference type="InterPro" id="IPR014721">
    <property type="entry name" value="Ribsml_uS5_D2-typ_fold_subgr"/>
</dbReference>
<dbReference type="PANTHER" id="PTHR48277">
    <property type="entry name" value="MITOCHONDRIAL RIBOSOMAL PROTEIN S5"/>
    <property type="match status" value="1"/>
</dbReference>
<dbReference type="PANTHER" id="PTHR48277:SF1">
    <property type="entry name" value="MITOCHONDRIAL RIBOSOMAL PROTEIN S5"/>
    <property type="match status" value="1"/>
</dbReference>
<dbReference type="Pfam" id="PF00333">
    <property type="entry name" value="Ribosomal_S5"/>
    <property type="match status" value="1"/>
</dbReference>
<dbReference type="Pfam" id="PF03719">
    <property type="entry name" value="Ribosomal_S5_C"/>
    <property type="match status" value="1"/>
</dbReference>
<dbReference type="SUPFAM" id="SSF54768">
    <property type="entry name" value="dsRNA-binding domain-like"/>
    <property type="match status" value="1"/>
</dbReference>
<dbReference type="SUPFAM" id="SSF54211">
    <property type="entry name" value="Ribosomal protein S5 domain 2-like"/>
    <property type="match status" value="1"/>
</dbReference>
<dbReference type="PROSITE" id="PS00585">
    <property type="entry name" value="RIBOSOMAL_S5"/>
    <property type="match status" value="1"/>
</dbReference>
<dbReference type="PROSITE" id="PS50881">
    <property type="entry name" value="S5_DSRBD"/>
    <property type="match status" value="1"/>
</dbReference>
<keyword id="KW-0002">3D-structure</keyword>
<keyword id="KW-0496">Mitochondrion</keyword>
<keyword id="KW-1185">Reference proteome</keyword>
<keyword id="KW-0687">Ribonucleoprotein</keyword>
<keyword id="KW-0689">Ribosomal protein</keyword>
<keyword id="KW-0809">Transit peptide</keyword>
<comment type="function">
    <text evidence="12 13">Component of the mitochondrial ribosome (mitoribosome), a dedicated translation machinery responsible for the synthesis of mitochondrial genome-encoded proteins, including at least some of the essential transmembrane subunits of the mitochondrial respiratory chain. The mitoribosomes are attached to the mitochondrial inner membrane and translation products are cotranslationally integrated into the membrane.</text>
</comment>
<comment type="subunit">
    <text evidence="3 4 9">Component of the mitochondrial small ribosomal subunit (mt-SSU). Mature yeast 74S mitochondrial ribosomes consist of a small (37S) and a large (54S) subunit. The 37S small subunit contains a 15S ribosomal RNA (15S mt-rRNA) and 34 different proteins. The 54S large subunit contains a 21S rRNA (21S mt-rRNA) and 46 different proteins. uS3m, uS4m and uS5m form the narrow entry site of the mRNA channel.</text>
</comment>
<comment type="subcellular location">
    <subcellularLocation>
        <location evidence="5 7">Mitochondrion</location>
    </subcellularLocation>
    <text evidence="8">Mitoribosomes are tethered to the mitochondrial inner membrane and spatially aligned with the membrane insertion machinery through two distinct membrane contact sites, formed by the 21S rRNA expansion segment 96-ES1 and the inner membrane protein MBA1.</text>
</comment>
<comment type="miscellaneous">
    <text evidence="6">Present with 6680 molecules/cell in log phase SD medium.</text>
</comment>
<comment type="similarity">
    <text evidence="11">Belongs to the universal ribosomal protein uS5 family.</text>
</comment>